<accession>Q99MB7</accession>
<accession>Q9D040</accession>
<accession>Q9D5C4</accession>
<accession>Q9D9L0</accession>
<gene>
    <name type="primary">Rnf141</name>
    <name type="synonym">Znf230</name>
</gene>
<sequence length="230" mass="25529">MGQQISDQTQLVINKLPEKVAKHVTLVRESGSLTYEEFLGRVAELNDVTAKVAAGQEKHLLFEVQPGSDSSAFWKVVVRVVCTKINKSSGIVEASRIMNLYQFIQLYKDITSQAAGVLAQSSTSEEPDENPSSVTSCQASLWMGRVKQLTDEEECCICMDGRADLILPCAHSFCQKCIDKWSDRHRNCPICRLQMTGANESWVVSDAPTEDDMANYILNMADEAGQPHRP</sequence>
<keyword id="KW-0025">Alternative splicing</keyword>
<keyword id="KW-0449">Lipoprotein</keyword>
<keyword id="KW-0472">Membrane</keyword>
<keyword id="KW-0479">Metal-binding</keyword>
<keyword id="KW-0519">Myristate</keyword>
<keyword id="KW-1185">Reference proteome</keyword>
<keyword id="KW-0862">Zinc</keyword>
<keyword id="KW-0863">Zinc-finger</keyword>
<proteinExistence type="evidence at protein level"/>
<evidence type="ECO:0000250" key="1">
    <source>
        <dbReference type="UniProtKB" id="Q8WVD5"/>
    </source>
</evidence>
<evidence type="ECO:0000255" key="2">
    <source>
        <dbReference type="PROSITE-ProRule" id="PRU00175"/>
    </source>
</evidence>
<evidence type="ECO:0000269" key="3">
    <source>
    </source>
</evidence>
<evidence type="ECO:0000305" key="4"/>
<protein>
    <recommendedName>
        <fullName>RING finger protein 141</fullName>
    </recommendedName>
    <alternativeName>
        <fullName>Zinc finger protein 230</fullName>
    </alternativeName>
</protein>
<reference key="1">
    <citation type="journal article" date="2003" name="Biochem. Biophys. Res. Commun.">
        <title>Molecular cloning and characterization of a mouse spermatogenesis-related ring finger gene znf230.</title>
        <authorList>
            <person name="Qiu W."/>
            <person name="Zhang S."/>
            <person name="Xiao C."/>
            <person name="Xu W."/>
            <person name="Ma Y."/>
            <person name="Liu Y."/>
            <person name="Wu Q."/>
        </authorList>
    </citation>
    <scope>NUCLEOTIDE SEQUENCE [MRNA]</scope>
    <scope>FUNCTION</scope>
    <scope>TISSUE SPECIFICITY</scope>
    <scope>DEVELOPMENTAL STAGE</scope>
    <scope>ALTERNATIVE SPLICING</scope>
    <source>
        <strain>Kunming</strain>
        <tissue>Testis</tissue>
    </source>
</reference>
<reference key="2">
    <citation type="journal article" date="2005" name="Science">
        <title>The transcriptional landscape of the mammalian genome.</title>
        <authorList>
            <person name="Carninci P."/>
            <person name="Kasukawa T."/>
            <person name="Katayama S."/>
            <person name="Gough J."/>
            <person name="Frith M.C."/>
            <person name="Maeda N."/>
            <person name="Oyama R."/>
            <person name="Ravasi T."/>
            <person name="Lenhard B."/>
            <person name="Wells C."/>
            <person name="Kodzius R."/>
            <person name="Shimokawa K."/>
            <person name="Bajic V.B."/>
            <person name="Brenner S.E."/>
            <person name="Batalov S."/>
            <person name="Forrest A.R."/>
            <person name="Zavolan M."/>
            <person name="Davis M.J."/>
            <person name="Wilming L.G."/>
            <person name="Aidinis V."/>
            <person name="Allen J.E."/>
            <person name="Ambesi-Impiombato A."/>
            <person name="Apweiler R."/>
            <person name="Aturaliya R.N."/>
            <person name="Bailey T.L."/>
            <person name="Bansal M."/>
            <person name="Baxter L."/>
            <person name="Beisel K.W."/>
            <person name="Bersano T."/>
            <person name="Bono H."/>
            <person name="Chalk A.M."/>
            <person name="Chiu K.P."/>
            <person name="Choudhary V."/>
            <person name="Christoffels A."/>
            <person name="Clutterbuck D.R."/>
            <person name="Crowe M.L."/>
            <person name="Dalla E."/>
            <person name="Dalrymple B.P."/>
            <person name="de Bono B."/>
            <person name="Della Gatta G."/>
            <person name="di Bernardo D."/>
            <person name="Down T."/>
            <person name="Engstrom P."/>
            <person name="Fagiolini M."/>
            <person name="Faulkner G."/>
            <person name="Fletcher C.F."/>
            <person name="Fukushima T."/>
            <person name="Furuno M."/>
            <person name="Futaki S."/>
            <person name="Gariboldi M."/>
            <person name="Georgii-Hemming P."/>
            <person name="Gingeras T.R."/>
            <person name="Gojobori T."/>
            <person name="Green R.E."/>
            <person name="Gustincich S."/>
            <person name="Harbers M."/>
            <person name="Hayashi Y."/>
            <person name="Hensch T.K."/>
            <person name="Hirokawa N."/>
            <person name="Hill D."/>
            <person name="Huminiecki L."/>
            <person name="Iacono M."/>
            <person name="Ikeo K."/>
            <person name="Iwama A."/>
            <person name="Ishikawa T."/>
            <person name="Jakt M."/>
            <person name="Kanapin A."/>
            <person name="Katoh M."/>
            <person name="Kawasawa Y."/>
            <person name="Kelso J."/>
            <person name="Kitamura H."/>
            <person name="Kitano H."/>
            <person name="Kollias G."/>
            <person name="Krishnan S.P."/>
            <person name="Kruger A."/>
            <person name="Kummerfeld S.K."/>
            <person name="Kurochkin I.V."/>
            <person name="Lareau L.F."/>
            <person name="Lazarevic D."/>
            <person name="Lipovich L."/>
            <person name="Liu J."/>
            <person name="Liuni S."/>
            <person name="McWilliam S."/>
            <person name="Madan Babu M."/>
            <person name="Madera M."/>
            <person name="Marchionni L."/>
            <person name="Matsuda H."/>
            <person name="Matsuzawa S."/>
            <person name="Miki H."/>
            <person name="Mignone F."/>
            <person name="Miyake S."/>
            <person name="Morris K."/>
            <person name="Mottagui-Tabar S."/>
            <person name="Mulder N."/>
            <person name="Nakano N."/>
            <person name="Nakauchi H."/>
            <person name="Ng P."/>
            <person name="Nilsson R."/>
            <person name="Nishiguchi S."/>
            <person name="Nishikawa S."/>
            <person name="Nori F."/>
            <person name="Ohara O."/>
            <person name="Okazaki Y."/>
            <person name="Orlando V."/>
            <person name="Pang K.C."/>
            <person name="Pavan W.J."/>
            <person name="Pavesi G."/>
            <person name="Pesole G."/>
            <person name="Petrovsky N."/>
            <person name="Piazza S."/>
            <person name="Reed J."/>
            <person name="Reid J.F."/>
            <person name="Ring B.Z."/>
            <person name="Ringwald M."/>
            <person name="Rost B."/>
            <person name="Ruan Y."/>
            <person name="Salzberg S.L."/>
            <person name="Sandelin A."/>
            <person name="Schneider C."/>
            <person name="Schoenbach C."/>
            <person name="Sekiguchi K."/>
            <person name="Semple C.A."/>
            <person name="Seno S."/>
            <person name="Sessa L."/>
            <person name="Sheng Y."/>
            <person name="Shibata Y."/>
            <person name="Shimada H."/>
            <person name="Shimada K."/>
            <person name="Silva D."/>
            <person name="Sinclair B."/>
            <person name="Sperling S."/>
            <person name="Stupka E."/>
            <person name="Sugiura K."/>
            <person name="Sultana R."/>
            <person name="Takenaka Y."/>
            <person name="Taki K."/>
            <person name="Tammoja K."/>
            <person name="Tan S.L."/>
            <person name="Tang S."/>
            <person name="Taylor M.S."/>
            <person name="Tegner J."/>
            <person name="Teichmann S.A."/>
            <person name="Ueda H.R."/>
            <person name="van Nimwegen E."/>
            <person name="Verardo R."/>
            <person name="Wei C.L."/>
            <person name="Yagi K."/>
            <person name="Yamanishi H."/>
            <person name="Zabarovsky E."/>
            <person name="Zhu S."/>
            <person name="Zimmer A."/>
            <person name="Hide W."/>
            <person name="Bult C."/>
            <person name="Grimmond S.M."/>
            <person name="Teasdale R.D."/>
            <person name="Liu E.T."/>
            <person name="Brusic V."/>
            <person name="Quackenbush J."/>
            <person name="Wahlestedt C."/>
            <person name="Mattick J.S."/>
            <person name="Hume D.A."/>
            <person name="Kai C."/>
            <person name="Sasaki D."/>
            <person name="Tomaru Y."/>
            <person name="Fukuda S."/>
            <person name="Kanamori-Katayama M."/>
            <person name="Suzuki M."/>
            <person name="Aoki J."/>
            <person name="Arakawa T."/>
            <person name="Iida J."/>
            <person name="Imamura K."/>
            <person name="Itoh M."/>
            <person name="Kato T."/>
            <person name="Kawaji H."/>
            <person name="Kawagashira N."/>
            <person name="Kawashima T."/>
            <person name="Kojima M."/>
            <person name="Kondo S."/>
            <person name="Konno H."/>
            <person name="Nakano K."/>
            <person name="Ninomiya N."/>
            <person name="Nishio T."/>
            <person name="Okada M."/>
            <person name="Plessy C."/>
            <person name="Shibata K."/>
            <person name="Shiraki T."/>
            <person name="Suzuki S."/>
            <person name="Tagami M."/>
            <person name="Waki K."/>
            <person name="Watahiki A."/>
            <person name="Okamura-Oho Y."/>
            <person name="Suzuki H."/>
            <person name="Kawai J."/>
            <person name="Hayashizaki Y."/>
        </authorList>
    </citation>
    <scope>NUCLEOTIDE SEQUENCE [LARGE SCALE MRNA]</scope>
    <source>
        <strain>C57BL/6J</strain>
        <tissue>Embryo</tissue>
        <tissue>Testis</tissue>
    </source>
</reference>
<reference key="3">
    <citation type="journal article" date="2004" name="Genome Res.">
        <title>The status, quality, and expansion of the NIH full-length cDNA project: the Mammalian Gene Collection (MGC).</title>
        <authorList>
            <consortium name="The MGC Project Team"/>
        </authorList>
    </citation>
    <scope>NUCLEOTIDE SEQUENCE [LARGE SCALE MRNA]</scope>
    <source>
        <strain>FVB/N</strain>
        <tissue>Mammary tumor</tissue>
    </source>
</reference>
<reference key="4">
    <citation type="journal article" date="2010" name="Cell">
        <title>A tissue-specific atlas of mouse protein phosphorylation and expression.</title>
        <authorList>
            <person name="Huttlin E.L."/>
            <person name="Jedrychowski M.P."/>
            <person name="Elias J.E."/>
            <person name="Goswami T."/>
            <person name="Rad R."/>
            <person name="Beausoleil S.A."/>
            <person name="Villen J."/>
            <person name="Haas W."/>
            <person name="Sowa M.E."/>
            <person name="Gygi S.P."/>
        </authorList>
    </citation>
    <scope>IDENTIFICATION BY MASS SPECTROMETRY [LARGE SCALE ANALYSIS]</scope>
    <source>
        <tissue>Brain</tissue>
        <tissue>Testis</tissue>
    </source>
</reference>
<dbReference type="EMBL" id="AF353167">
    <property type="protein sequence ID" value="AAK31205.1"/>
    <property type="molecule type" value="mRNA"/>
</dbReference>
<dbReference type="EMBL" id="AK006791">
    <property type="protein sequence ID" value="BAB24742.1"/>
    <property type="molecule type" value="mRNA"/>
</dbReference>
<dbReference type="EMBL" id="AK011839">
    <property type="protein sequence ID" value="BAB27871.1"/>
    <property type="molecule type" value="mRNA"/>
</dbReference>
<dbReference type="EMBL" id="AK015505">
    <property type="protein sequence ID" value="BAB29874.1"/>
    <property type="molecule type" value="mRNA"/>
</dbReference>
<dbReference type="EMBL" id="BC018553">
    <property type="protein sequence ID" value="AAH18553.1"/>
    <property type="molecule type" value="mRNA"/>
</dbReference>
<dbReference type="CCDS" id="CCDS40086.1">
    <molecule id="Q99MB7-1"/>
</dbReference>
<dbReference type="RefSeq" id="NP_001405731.1">
    <molecule id="Q99MB7-1"/>
    <property type="nucleotide sequence ID" value="NM_001418802.1"/>
</dbReference>
<dbReference type="RefSeq" id="NP_001405732.1">
    <molecule id="Q99MB7-1"/>
    <property type="nucleotide sequence ID" value="NM_001418803.1"/>
</dbReference>
<dbReference type="RefSeq" id="NP_001405733.1">
    <molecule id="Q99MB7-1"/>
    <property type="nucleotide sequence ID" value="NM_001418804.1"/>
</dbReference>
<dbReference type="RefSeq" id="NP_080275.2">
    <molecule id="Q99MB7-1"/>
    <property type="nucleotide sequence ID" value="NM_025999.4"/>
</dbReference>
<dbReference type="RefSeq" id="XP_006508186.1">
    <property type="nucleotide sequence ID" value="XM_006508123.2"/>
</dbReference>
<dbReference type="RefSeq" id="XP_006508187.1">
    <property type="nucleotide sequence ID" value="XM_006508124.2"/>
</dbReference>
<dbReference type="BioGRID" id="211978">
    <property type="interactions" value="2"/>
</dbReference>
<dbReference type="FunCoup" id="Q99MB7">
    <property type="interactions" value="73"/>
</dbReference>
<dbReference type="STRING" id="10090.ENSMUSP00000134781"/>
<dbReference type="iPTMnet" id="Q99MB7"/>
<dbReference type="PhosphoSitePlus" id="Q99MB7"/>
<dbReference type="PaxDb" id="10090-ENSMUSP00000134781"/>
<dbReference type="ProteomicsDB" id="300413">
    <molecule id="Q99MB7-1"/>
</dbReference>
<dbReference type="Pumba" id="Q99MB7"/>
<dbReference type="Antibodypedia" id="11671">
    <property type="antibodies" value="193 antibodies from 30 providers"/>
</dbReference>
<dbReference type="DNASU" id="67150"/>
<dbReference type="Ensembl" id="ENSMUST00000106682.10">
    <molecule id="Q99MB7-1"/>
    <property type="protein sequence ID" value="ENSMUSP00000102293.4"/>
    <property type="gene ID" value="ENSMUSG00000030788.17"/>
</dbReference>
<dbReference type="Ensembl" id="ENSMUST00000177236.8">
    <molecule id="Q99MB7-1"/>
    <property type="protein sequence ID" value="ENSMUSP00000134781.2"/>
    <property type="gene ID" value="ENSMUSG00000030788.17"/>
</dbReference>
<dbReference type="GeneID" id="67150"/>
<dbReference type="KEGG" id="mmu:67150"/>
<dbReference type="UCSC" id="uc009jfp.1">
    <molecule id="Q99MB7-1"/>
    <property type="organism name" value="mouse"/>
</dbReference>
<dbReference type="AGR" id="MGI:1914400"/>
<dbReference type="CTD" id="50862"/>
<dbReference type="MGI" id="MGI:1914400">
    <property type="gene designation" value="Rnf141"/>
</dbReference>
<dbReference type="VEuPathDB" id="HostDB:ENSMUSG00000030788"/>
<dbReference type="eggNOG" id="KOG1039">
    <property type="taxonomic scope" value="Eukaryota"/>
</dbReference>
<dbReference type="GeneTree" id="ENSGT00390000003145"/>
<dbReference type="HOGENOM" id="CLU_080007_0_0_1"/>
<dbReference type="InParanoid" id="Q99MB7"/>
<dbReference type="OMA" id="RHRNCPV"/>
<dbReference type="OrthoDB" id="1630758at2759"/>
<dbReference type="PhylomeDB" id="Q99MB7"/>
<dbReference type="TreeFam" id="TF323284"/>
<dbReference type="BioGRID-ORCS" id="67150">
    <property type="hits" value="0 hits in 76 CRISPR screens"/>
</dbReference>
<dbReference type="ChiTaRS" id="Rnf141">
    <property type="organism name" value="mouse"/>
</dbReference>
<dbReference type="PRO" id="PR:Q99MB7"/>
<dbReference type="Proteomes" id="UP000000589">
    <property type="component" value="Chromosome 7"/>
</dbReference>
<dbReference type="RNAct" id="Q99MB7">
    <property type="molecule type" value="protein"/>
</dbReference>
<dbReference type="Bgee" id="ENSMUSG00000030788">
    <property type="expression patterns" value="Expressed in animal zygote and 260 other cell types or tissues"/>
</dbReference>
<dbReference type="ExpressionAtlas" id="Q99MB7">
    <property type="expression patterns" value="baseline and differential"/>
</dbReference>
<dbReference type="GO" id="GO:0016020">
    <property type="term" value="C:membrane"/>
    <property type="evidence" value="ECO:0007669"/>
    <property type="project" value="UniProtKB-SubCell"/>
</dbReference>
<dbReference type="GO" id="GO:0004842">
    <property type="term" value="F:ubiquitin-protein transferase activity"/>
    <property type="evidence" value="ECO:0007669"/>
    <property type="project" value="Ensembl"/>
</dbReference>
<dbReference type="GO" id="GO:0008270">
    <property type="term" value="F:zinc ion binding"/>
    <property type="evidence" value="ECO:0007669"/>
    <property type="project" value="UniProtKB-KW"/>
</dbReference>
<dbReference type="GO" id="GO:0051865">
    <property type="term" value="P:protein autoubiquitination"/>
    <property type="evidence" value="ECO:0007669"/>
    <property type="project" value="Ensembl"/>
</dbReference>
<dbReference type="GO" id="GO:0006355">
    <property type="term" value="P:regulation of DNA-templated transcription"/>
    <property type="evidence" value="ECO:0000314"/>
    <property type="project" value="MGI"/>
</dbReference>
<dbReference type="CDD" id="cd16545">
    <property type="entry name" value="RING-HC_RNF141"/>
    <property type="match status" value="1"/>
</dbReference>
<dbReference type="FunFam" id="3.30.40.10:FF:000160">
    <property type="entry name" value="Ring finger protein 141"/>
    <property type="match status" value="1"/>
</dbReference>
<dbReference type="Gene3D" id="3.30.40.10">
    <property type="entry name" value="Zinc/RING finger domain, C3HC4 (zinc finger)"/>
    <property type="match status" value="1"/>
</dbReference>
<dbReference type="InterPro" id="IPR043400">
    <property type="entry name" value="RING-HC_RNF141"/>
</dbReference>
<dbReference type="InterPro" id="IPR047126">
    <property type="entry name" value="RNF141-like"/>
</dbReference>
<dbReference type="InterPro" id="IPR001841">
    <property type="entry name" value="Znf_RING"/>
</dbReference>
<dbReference type="InterPro" id="IPR013083">
    <property type="entry name" value="Znf_RING/FYVE/PHD"/>
</dbReference>
<dbReference type="InterPro" id="IPR017907">
    <property type="entry name" value="Znf_RING_CS"/>
</dbReference>
<dbReference type="PANTHER" id="PTHR12109:SF3">
    <property type="entry name" value="RING FINGER PROTEIN 141"/>
    <property type="match status" value="1"/>
</dbReference>
<dbReference type="PANTHER" id="PTHR12109">
    <property type="entry name" value="RING FINGER PROTEIN 141-RELATED"/>
    <property type="match status" value="1"/>
</dbReference>
<dbReference type="Pfam" id="PF13639">
    <property type="entry name" value="zf-RING_2"/>
    <property type="match status" value="1"/>
</dbReference>
<dbReference type="SMART" id="SM00184">
    <property type="entry name" value="RING"/>
    <property type="match status" value="1"/>
</dbReference>
<dbReference type="SUPFAM" id="SSF57850">
    <property type="entry name" value="RING/U-box"/>
    <property type="match status" value="1"/>
</dbReference>
<dbReference type="PROSITE" id="PS00518">
    <property type="entry name" value="ZF_RING_1"/>
    <property type="match status" value="1"/>
</dbReference>
<dbReference type="PROSITE" id="PS50089">
    <property type="entry name" value="ZF_RING_2"/>
    <property type="match status" value="1"/>
</dbReference>
<name>RN141_MOUSE</name>
<organism>
    <name type="scientific">Mus musculus</name>
    <name type="common">Mouse</name>
    <dbReference type="NCBI Taxonomy" id="10090"/>
    <lineage>
        <taxon>Eukaryota</taxon>
        <taxon>Metazoa</taxon>
        <taxon>Chordata</taxon>
        <taxon>Craniata</taxon>
        <taxon>Vertebrata</taxon>
        <taxon>Euteleostomi</taxon>
        <taxon>Mammalia</taxon>
        <taxon>Eutheria</taxon>
        <taxon>Euarchontoglires</taxon>
        <taxon>Glires</taxon>
        <taxon>Rodentia</taxon>
        <taxon>Myomorpha</taxon>
        <taxon>Muroidea</taxon>
        <taxon>Muridae</taxon>
        <taxon>Murinae</taxon>
        <taxon>Mus</taxon>
        <taxon>Mus</taxon>
    </lineage>
</organism>
<comment type="function">
    <text evidence="3">May be involved in spermatogenesis.</text>
</comment>
<comment type="subcellular location">
    <subcellularLocation>
        <location evidence="1">Membrane</location>
        <topology evidence="1">Lipid-anchor</topology>
    </subcellularLocation>
</comment>
<comment type="alternative products">
    <event type="alternative splicing"/>
    <isoform>
        <id>Q99MB7-1</id>
        <name>1</name>
        <sequence type="displayed"/>
    </isoform>
    <isoform>
        <id>Q99MB7-2</id>
        <name>2</name>
        <sequence type="not described"/>
    </isoform>
    <isoform>
        <id>Q99MB7-3</id>
        <name>3</name>
        <sequence type="not described"/>
    </isoform>
</comment>
<comment type="tissue specificity">
    <text evidence="3">Isoform 1 is testis-specific. Isoform 2 is expressed in heart, brain, skeletal muscle, kidney, pancreas, lung, liver and testis. Isoform 3 is expressed in heart, liver, and kidney.</text>
</comment>
<comment type="developmental stage">
    <text evidence="3">Expression was first detected at postnatal day 6, and reached the adult level between postnatal day 14 and 21.</text>
</comment>
<feature type="initiator methionine" description="Removed" evidence="1">
    <location>
        <position position="1"/>
    </location>
</feature>
<feature type="chain" id="PRO_0000056102" description="RING finger protein 141">
    <location>
        <begin position="2"/>
        <end position="230"/>
    </location>
</feature>
<feature type="zinc finger region" description="RING-type" evidence="2">
    <location>
        <begin position="155"/>
        <end position="192"/>
    </location>
</feature>
<feature type="lipid moiety-binding region" description="N-myristoyl glycine" evidence="1">
    <location>
        <position position="2"/>
    </location>
</feature>
<feature type="sequence conflict" description="In Ref. 2; BAB27871." evidence="4" ref="2">
    <original>QL</original>
    <variation>HV</variation>
    <location>
        <begin position="10"/>
        <end position="11"/>
    </location>
</feature>
<feature type="sequence conflict" description="In Ref. 1; AAK31205." evidence="4" ref="1">
    <original>A</original>
    <variation>S</variation>
    <location>
        <position position="139"/>
    </location>
</feature>
<feature type="sequence conflict" description="In Ref. 2; BAB24742." evidence="4" ref="2">
    <original>Q</original>
    <variation>R</variation>
    <location>
        <position position="148"/>
    </location>
</feature>